<reference evidence="13" key="1">
    <citation type="journal article" date="2005" name="Science">
        <title>The transcriptional landscape of the mammalian genome.</title>
        <authorList>
            <person name="Carninci P."/>
            <person name="Kasukawa T."/>
            <person name="Katayama S."/>
            <person name="Gough J."/>
            <person name="Frith M.C."/>
            <person name="Maeda N."/>
            <person name="Oyama R."/>
            <person name="Ravasi T."/>
            <person name="Lenhard B."/>
            <person name="Wells C."/>
            <person name="Kodzius R."/>
            <person name="Shimokawa K."/>
            <person name="Bajic V.B."/>
            <person name="Brenner S.E."/>
            <person name="Batalov S."/>
            <person name="Forrest A.R."/>
            <person name="Zavolan M."/>
            <person name="Davis M.J."/>
            <person name="Wilming L.G."/>
            <person name="Aidinis V."/>
            <person name="Allen J.E."/>
            <person name="Ambesi-Impiombato A."/>
            <person name="Apweiler R."/>
            <person name="Aturaliya R.N."/>
            <person name="Bailey T.L."/>
            <person name="Bansal M."/>
            <person name="Baxter L."/>
            <person name="Beisel K.W."/>
            <person name="Bersano T."/>
            <person name="Bono H."/>
            <person name="Chalk A.M."/>
            <person name="Chiu K.P."/>
            <person name="Choudhary V."/>
            <person name="Christoffels A."/>
            <person name="Clutterbuck D.R."/>
            <person name="Crowe M.L."/>
            <person name="Dalla E."/>
            <person name="Dalrymple B.P."/>
            <person name="de Bono B."/>
            <person name="Della Gatta G."/>
            <person name="di Bernardo D."/>
            <person name="Down T."/>
            <person name="Engstrom P."/>
            <person name="Fagiolini M."/>
            <person name="Faulkner G."/>
            <person name="Fletcher C.F."/>
            <person name="Fukushima T."/>
            <person name="Furuno M."/>
            <person name="Futaki S."/>
            <person name="Gariboldi M."/>
            <person name="Georgii-Hemming P."/>
            <person name="Gingeras T.R."/>
            <person name="Gojobori T."/>
            <person name="Green R.E."/>
            <person name="Gustincich S."/>
            <person name="Harbers M."/>
            <person name="Hayashi Y."/>
            <person name="Hensch T.K."/>
            <person name="Hirokawa N."/>
            <person name="Hill D."/>
            <person name="Huminiecki L."/>
            <person name="Iacono M."/>
            <person name="Ikeo K."/>
            <person name="Iwama A."/>
            <person name="Ishikawa T."/>
            <person name="Jakt M."/>
            <person name="Kanapin A."/>
            <person name="Katoh M."/>
            <person name="Kawasawa Y."/>
            <person name="Kelso J."/>
            <person name="Kitamura H."/>
            <person name="Kitano H."/>
            <person name="Kollias G."/>
            <person name="Krishnan S.P."/>
            <person name="Kruger A."/>
            <person name="Kummerfeld S.K."/>
            <person name="Kurochkin I.V."/>
            <person name="Lareau L.F."/>
            <person name="Lazarevic D."/>
            <person name="Lipovich L."/>
            <person name="Liu J."/>
            <person name="Liuni S."/>
            <person name="McWilliam S."/>
            <person name="Madan Babu M."/>
            <person name="Madera M."/>
            <person name="Marchionni L."/>
            <person name="Matsuda H."/>
            <person name="Matsuzawa S."/>
            <person name="Miki H."/>
            <person name="Mignone F."/>
            <person name="Miyake S."/>
            <person name="Morris K."/>
            <person name="Mottagui-Tabar S."/>
            <person name="Mulder N."/>
            <person name="Nakano N."/>
            <person name="Nakauchi H."/>
            <person name="Ng P."/>
            <person name="Nilsson R."/>
            <person name="Nishiguchi S."/>
            <person name="Nishikawa S."/>
            <person name="Nori F."/>
            <person name="Ohara O."/>
            <person name="Okazaki Y."/>
            <person name="Orlando V."/>
            <person name="Pang K.C."/>
            <person name="Pavan W.J."/>
            <person name="Pavesi G."/>
            <person name="Pesole G."/>
            <person name="Petrovsky N."/>
            <person name="Piazza S."/>
            <person name="Reed J."/>
            <person name="Reid J.F."/>
            <person name="Ring B.Z."/>
            <person name="Ringwald M."/>
            <person name="Rost B."/>
            <person name="Ruan Y."/>
            <person name="Salzberg S.L."/>
            <person name="Sandelin A."/>
            <person name="Schneider C."/>
            <person name="Schoenbach C."/>
            <person name="Sekiguchi K."/>
            <person name="Semple C.A."/>
            <person name="Seno S."/>
            <person name="Sessa L."/>
            <person name="Sheng Y."/>
            <person name="Shibata Y."/>
            <person name="Shimada H."/>
            <person name="Shimada K."/>
            <person name="Silva D."/>
            <person name="Sinclair B."/>
            <person name="Sperling S."/>
            <person name="Stupka E."/>
            <person name="Sugiura K."/>
            <person name="Sultana R."/>
            <person name="Takenaka Y."/>
            <person name="Taki K."/>
            <person name="Tammoja K."/>
            <person name="Tan S.L."/>
            <person name="Tang S."/>
            <person name="Taylor M.S."/>
            <person name="Tegner J."/>
            <person name="Teichmann S.A."/>
            <person name="Ueda H.R."/>
            <person name="van Nimwegen E."/>
            <person name="Verardo R."/>
            <person name="Wei C.L."/>
            <person name="Yagi K."/>
            <person name="Yamanishi H."/>
            <person name="Zabarovsky E."/>
            <person name="Zhu S."/>
            <person name="Zimmer A."/>
            <person name="Hide W."/>
            <person name="Bult C."/>
            <person name="Grimmond S.M."/>
            <person name="Teasdale R.D."/>
            <person name="Liu E.T."/>
            <person name="Brusic V."/>
            <person name="Quackenbush J."/>
            <person name="Wahlestedt C."/>
            <person name="Mattick J.S."/>
            <person name="Hume D.A."/>
            <person name="Kai C."/>
            <person name="Sasaki D."/>
            <person name="Tomaru Y."/>
            <person name="Fukuda S."/>
            <person name="Kanamori-Katayama M."/>
            <person name="Suzuki M."/>
            <person name="Aoki J."/>
            <person name="Arakawa T."/>
            <person name="Iida J."/>
            <person name="Imamura K."/>
            <person name="Itoh M."/>
            <person name="Kato T."/>
            <person name="Kawaji H."/>
            <person name="Kawagashira N."/>
            <person name="Kawashima T."/>
            <person name="Kojima M."/>
            <person name="Kondo S."/>
            <person name="Konno H."/>
            <person name="Nakano K."/>
            <person name="Ninomiya N."/>
            <person name="Nishio T."/>
            <person name="Okada M."/>
            <person name="Plessy C."/>
            <person name="Shibata K."/>
            <person name="Shiraki T."/>
            <person name="Suzuki S."/>
            <person name="Tagami M."/>
            <person name="Waki K."/>
            <person name="Watahiki A."/>
            <person name="Okamura-Oho Y."/>
            <person name="Suzuki H."/>
            <person name="Kawai J."/>
            <person name="Hayashizaki Y."/>
        </authorList>
    </citation>
    <scope>NUCLEOTIDE SEQUENCE [LARGE SCALE MRNA] (ISOFORM 1)</scope>
    <source>
        <strain evidence="13">C57BL/6J</strain>
        <tissue evidence="13">Colon</tissue>
    </source>
</reference>
<reference evidence="15" key="2">
    <citation type="journal article" date="2009" name="PLoS Biol.">
        <title>Lineage-specific biology revealed by a finished genome assembly of the mouse.</title>
        <authorList>
            <person name="Church D.M."/>
            <person name="Goodstadt L."/>
            <person name="Hillier L.W."/>
            <person name="Zody M.C."/>
            <person name="Goldstein S."/>
            <person name="She X."/>
            <person name="Bult C.J."/>
            <person name="Agarwala R."/>
            <person name="Cherry J.L."/>
            <person name="DiCuccio M."/>
            <person name="Hlavina W."/>
            <person name="Kapustin Y."/>
            <person name="Meric P."/>
            <person name="Maglott D."/>
            <person name="Birtle Z."/>
            <person name="Marques A.C."/>
            <person name="Graves T."/>
            <person name="Zhou S."/>
            <person name="Teague B."/>
            <person name="Potamousis K."/>
            <person name="Churas C."/>
            <person name="Place M."/>
            <person name="Herschleb J."/>
            <person name="Runnheim R."/>
            <person name="Forrest D."/>
            <person name="Amos-Landgraf J."/>
            <person name="Schwartz D.C."/>
            <person name="Cheng Z."/>
            <person name="Lindblad-Toh K."/>
            <person name="Eichler E.E."/>
            <person name="Ponting C.P."/>
        </authorList>
    </citation>
    <scope>NUCLEOTIDE SEQUENCE [LARGE SCALE GENOMIC DNA]</scope>
    <source>
        <strain evidence="15">C57BL/6J</strain>
    </source>
</reference>
<reference evidence="12" key="3">
    <citation type="journal article" date="2004" name="Genome Res.">
        <title>The status, quality, and expansion of the NIH full-length cDNA project: the Mammalian Gene Collection (MGC).</title>
        <authorList>
            <consortium name="The MGC Project Team"/>
        </authorList>
    </citation>
    <scope>NUCLEOTIDE SEQUENCE [LARGE SCALE MRNA] (ISOFORM 1)</scope>
    <source>
        <strain evidence="12">FVB/N</strain>
        <tissue evidence="12">Kidney</tissue>
    </source>
</reference>
<reference evidence="10" key="4">
    <citation type="journal article" date="2006" name="Diabetes">
        <title>Identification of a novel member of the carboxylesterase family that hydrolyzes triacylglycerol: a potential role in adipocyte lipolysis.</title>
        <authorList>
            <person name="Okazaki H."/>
            <person name="Igarashi M."/>
            <person name="Nishi M."/>
            <person name="Tajima M."/>
            <person name="Sekiya M."/>
            <person name="Okazaki S."/>
            <person name="Yahagi N."/>
            <person name="Ohashi K."/>
            <person name="Tsukamoto K."/>
            <person name="Amemiya-Kudo M."/>
            <person name="Matsuzaka T."/>
            <person name="Shimano H."/>
            <person name="Yamada N."/>
            <person name="Aoki J."/>
            <person name="Morikawa R."/>
            <person name="Takanezawa Y."/>
            <person name="Arai H."/>
            <person name="Nagai R."/>
            <person name="Kadowaki T."/>
            <person name="Osuga J."/>
            <person name="Ishibashi S."/>
        </authorList>
    </citation>
    <scope>FUNCTION</scope>
    <scope>CATALYTIC ACTIVITY</scope>
    <scope>SUBCELLULAR LOCATION</scope>
    <scope>TISSUE SPECIFICITY</scope>
    <scope>INDUCTION BY FASTING</scope>
</reference>
<reference key="5">
    <citation type="journal article" date="2010" name="Cell">
        <title>A tissue-specific atlas of mouse protein phosphorylation and expression.</title>
        <authorList>
            <person name="Huttlin E.L."/>
            <person name="Jedrychowski M.P."/>
            <person name="Elias J.E."/>
            <person name="Goswami T."/>
            <person name="Rad R."/>
            <person name="Beausoleil S.A."/>
            <person name="Villen J."/>
            <person name="Haas W."/>
            <person name="Sowa M.E."/>
            <person name="Gygi S.P."/>
        </authorList>
    </citation>
    <scope>IDENTIFICATION BY MASS SPECTROMETRY [LARGE SCALE ANALYSIS]</scope>
    <source>
        <tissue>Brown adipose tissue</tissue>
        <tissue>Kidney</tissue>
        <tissue>Liver</tissue>
    </source>
</reference>
<protein>
    <recommendedName>
        <fullName evidence="14">Carboxylesterase 1F</fullName>
        <ecNumber evidence="5 8">3.1.1.1</ecNumber>
    </recommendedName>
    <alternativeName>
        <fullName evidence="5">Carboxylic ester hydrolase</fullName>
    </alternativeName>
    <alternativeName>
        <fullName evidence="9">Triacylglycerol hydrolase 2</fullName>
        <shortName evidence="9">TGH-2</shortName>
    </alternativeName>
</protein>
<dbReference type="EC" id="3.1.1.1" evidence="5 8"/>
<dbReference type="EMBL" id="AK136491">
    <property type="protein sequence ID" value="BAE23005.1"/>
    <property type="molecule type" value="mRNA"/>
</dbReference>
<dbReference type="EMBL" id="AC162949">
    <property type="status" value="NOT_ANNOTATED_CDS"/>
    <property type="molecule type" value="Genomic_DNA"/>
</dbReference>
<dbReference type="EMBL" id="BC013479">
    <property type="protein sequence ID" value="AAH13479.1"/>
    <property type="molecule type" value="mRNA"/>
</dbReference>
<dbReference type="CCDS" id="CCDS22530.1">
    <molecule id="Q91WU0-1"/>
</dbReference>
<dbReference type="RefSeq" id="NP_659179.1">
    <molecule id="Q91WU0-1"/>
    <property type="nucleotide sequence ID" value="NM_144930.2"/>
</dbReference>
<dbReference type="SMR" id="Q91WU0"/>
<dbReference type="FunCoup" id="Q91WU0">
    <property type="interactions" value="461"/>
</dbReference>
<dbReference type="STRING" id="10090.ENSMUSP00000034178"/>
<dbReference type="ESTHER" id="mouse-Ces1f">
    <property type="family name" value="Carb_B_Chordata"/>
</dbReference>
<dbReference type="GlyGen" id="Q91WU0">
    <property type="glycosylation" value="3 sites, 1 N-linked glycan (1 site), 1 O-linked glycan (1 site)"/>
</dbReference>
<dbReference type="iPTMnet" id="Q91WU0"/>
<dbReference type="PhosphoSitePlus" id="Q91WU0"/>
<dbReference type="SwissPalm" id="Q91WU0"/>
<dbReference type="jPOST" id="Q91WU0"/>
<dbReference type="PaxDb" id="10090-ENSMUSP00000034178"/>
<dbReference type="PeptideAtlas" id="Q91WU0"/>
<dbReference type="ProteomicsDB" id="281385">
    <molecule id="Q91WU0-1"/>
</dbReference>
<dbReference type="DNASU" id="234564"/>
<dbReference type="Ensembl" id="ENSMUST00000034178.9">
    <molecule id="Q91WU0-1"/>
    <property type="protein sequence ID" value="ENSMUSP00000034178.9"/>
    <property type="gene ID" value="ENSMUSG00000031725.9"/>
</dbReference>
<dbReference type="Ensembl" id="ENSMUST00000140026.2">
    <molecule id="Q91WU0-2"/>
    <property type="protein sequence ID" value="ENSMUSP00000116525.2"/>
    <property type="gene ID" value="ENSMUSG00000031725.9"/>
</dbReference>
<dbReference type="GeneID" id="234564"/>
<dbReference type="KEGG" id="mmu:234564"/>
<dbReference type="UCSC" id="uc009mup.2">
    <molecule id="Q91WU0-1"/>
    <property type="organism name" value="mouse"/>
</dbReference>
<dbReference type="AGR" id="MGI:2142687"/>
<dbReference type="CTD" id="234564"/>
<dbReference type="MGI" id="MGI:2142687">
    <property type="gene designation" value="Ces1f"/>
</dbReference>
<dbReference type="VEuPathDB" id="HostDB:ENSMUSG00000031725"/>
<dbReference type="eggNOG" id="KOG1516">
    <property type="taxonomic scope" value="Eukaryota"/>
</dbReference>
<dbReference type="GeneTree" id="ENSGT00940000158564"/>
<dbReference type="HOGENOM" id="CLU_006586_13_0_1"/>
<dbReference type="InParanoid" id="Q91WU0"/>
<dbReference type="OMA" id="WLKYDED"/>
<dbReference type="OrthoDB" id="3200163at2759"/>
<dbReference type="PhylomeDB" id="Q91WU0"/>
<dbReference type="TreeFam" id="TF315470"/>
<dbReference type="BioGRID-ORCS" id="234564">
    <property type="hits" value="0 hits in 76 CRISPR screens"/>
</dbReference>
<dbReference type="PRO" id="PR:Q91WU0"/>
<dbReference type="Proteomes" id="UP000000589">
    <property type="component" value="Chromosome 8"/>
</dbReference>
<dbReference type="RNAct" id="Q91WU0">
    <property type="molecule type" value="protein"/>
</dbReference>
<dbReference type="Bgee" id="ENSMUSG00000031725">
    <property type="expression patterns" value="Expressed in right kidney and 70 other cell types or tissues"/>
</dbReference>
<dbReference type="GO" id="GO:0005829">
    <property type="term" value="C:cytosol"/>
    <property type="evidence" value="ECO:0000314"/>
    <property type="project" value="MGI"/>
</dbReference>
<dbReference type="GO" id="GO:0005783">
    <property type="term" value="C:endoplasmic reticulum"/>
    <property type="evidence" value="ECO:0007669"/>
    <property type="project" value="UniProtKB-SubCell"/>
</dbReference>
<dbReference type="GO" id="GO:0005811">
    <property type="term" value="C:lipid droplet"/>
    <property type="evidence" value="ECO:0000314"/>
    <property type="project" value="MGI"/>
</dbReference>
<dbReference type="GO" id="GO:0047376">
    <property type="term" value="F:all-trans-retinyl-palmitate hydrolase, all-trans-retinol forming activity"/>
    <property type="evidence" value="ECO:0007669"/>
    <property type="project" value="RHEA"/>
</dbReference>
<dbReference type="GO" id="GO:0106435">
    <property type="term" value="F:carboxylesterase activity"/>
    <property type="evidence" value="ECO:0007669"/>
    <property type="project" value="UniProtKB-EC"/>
</dbReference>
<dbReference type="GO" id="GO:0019626">
    <property type="term" value="P:short-chain fatty acid catabolic process"/>
    <property type="evidence" value="ECO:0000314"/>
    <property type="project" value="MGI"/>
</dbReference>
<dbReference type="CDD" id="cd00312">
    <property type="entry name" value="Esterase_lipase"/>
    <property type="match status" value="1"/>
</dbReference>
<dbReference type="FunFam" id="3.40.50.1820:FF:000011">
    <property type="entry name" value="Carboxylic ester hydrolase"/>
    <property type="match status" value="1"/>
</dbReference>
<dbReference type="Gene3D" id="3.40.50.1820">
    <property type="entry name" value="alpha/beta hydrolase"/>
    <property type="match status" value="1"/>
</dbReference>
<dbReference type="InterPro" id="IPR029058">
    <property type="entry name" value="AB_hydrolase_fold"/>
</dbReference>
<dbReference type="InterPro" id="IPR002018">
    <property type="entry name" value="CarbesteraseB"/>
</dbReference>
<dbReference type="InterPro" id="IPR019826">
    <property type="entry name" value="Carboxylesterase_B_AS"/>
</dbReference>
<dbReference type="InterPro" id="IPR019819">
    <property type="entry name" value="Carboxylesterase_B_CS"/>
</dbReference>
<dbReference type="InterPro" id="IPR050309">
    <property type="entry name" value="Type-B_Carboxylest/Lipase"/>
</dbReference>
<dbReference type="PANTHER" id="PTHR11559">
    <property type="entry name" value="CARBOXYLESTERASE"/>
    <property type="match status" value="1"/>
</dbReference>
<dbReference type="Pfam" id="PF00135">
    <property type="entry name" value="COesterase"/>
    <property type="match status" value="1"/>
</dbReference>
<dbReference type="SUPFAM" id="SSF53474">
    <property type="entry name" value="alpha/beta-Hydrolases"/>
    <property type="match status" value="1"/>
</dbReference>
<dbReference type="PROSITE" id="PS00122">
    <property type="entry name" value="CARBOXYLESTERASE_B_1"/>
    <property type="match status" value="1"/>
</dbReference>
<dbReference type="PROSITE" id="PS00941">
    <property type="entry name" value="CARBOXYLESTERASE_B_2"/>
    <property type="match status" value="1"/>
</dbReference>
<proteinExistence type="evidence at protein level"/>
<comment type="function">
    <text evidence="2 8">Involved in the detoxification of xenobiotics and in the activation of ester and amide prodrugs. Hydrolyzes retinyl esters (By similarity). Hydrolyzes p-nitrophenyl butyrate (PNPB), triacylglycerol and monoacylglycerol. Shows higher activity against PNPB, a short-chain fatty acid ester, than against triolein, a long-chain fatty acid ester. Shows no detectable activity against diacylglycerol, cholesterol ester or phospholipids. May play a role in adipocyte lipolysis.</text>
</comment>
<comment type="catalytic activity">
    <reaction evidence="5 8">
        <text>a carboxylic ester + H2O = an alcohol + a carboxylate + H(+)</text>
        <dbReference type="Rhea" id="RHEA:21164"/>
        <dbReference type="ChEBI" id="CHEBI:15377"/>
        <dbReference type="ChEBI" id="CHEBI:15378"/>
        <dbReference type="ChEBI" id="CHEBI:29067"/>
        <dbReference type="ChEBI" id="CHEBI:30879"/>
        <dbReference type="ChEBI" id="CHEBI:33308"/>
        <dbReference type="EC" id="3.1.1.1"/>
    </reaction>
</comment>
<comment type="catalytic activity">
    <reaction evidence="2">
        <text>all-trans-retinyl hexadecanoate + H2O = all-trans-retinol + hexadecanoate + H(+)</text>
        <dbReference type="Rhea" id="RHEA:13933"/>
        <dbReference type="ChEBI" id="CHEBI:7896"/>
        <dbReference type="ChEBI" id="CHEBI:15377"/>
        <dbReference type="ChEBI" id="CHEBI:15378"/>
        <dbReference type="ChEBI" id="CHEBI:17336"/>
        <dbReference type="ChEBI" id="CHEBI:17616"/>
    </reaction>
    <physiologicalReaction direction="left-to-right" evidence="2">
        <dbReference type="Rhea" id="RHEA:13934"/>
    </physiologicalReaction>
</comment>
<comment type="subcellular location">
    <subcellularLocation>
        <location evidence="11">Lipid droplet</location>
    </subcellularLocation>
    <subcellularLocation>
        <location evidence="8">Cytoplasm</location>
        <location evidence="8">Cytosol</location>
    </subcellularLocation>
    <subcellularLocation>
        <location evidence="8">Endoplasmic reticulum</location>
    </subcellularLocation>
    <subcellularLocation>
        <location evidence="2">Microsome</location>
    </subcellularLocation>
</comment>
<comment type="alternative products">
    <event type="alternative splicing"/>
    <isoform>
        <id>Q91WU0-1</id>
        <name>1</name>
        <sequence type="displayed"/>
    </isoform>
    <isoform>
        <id>Q91WU0-2</id>
        <name>2</name>
        <sequence type="described" ref="VSP_058396 VSP_058397"/>
    </isoform>
</comment>
<comment type="tissue specificity">
    <text evidence="8">Expressed in liver, white and brown adipose tissue, kidney, intestine, adrenal, heart and ovary. Not detected in muscle, lung, testis, brain and spleen.</text>
</comment>
<comment type="induction">
    <text evidence="8">Induced by fasting and repressed by refeeding.</text>
</comment>
<comment type="miscellaneous">
    <molecule>Isoform 2</molecule>
    <text evidence="10">May be produced at very low levels due to a premature stop codon in the mRNA, leading to nonsense-mediated mRNA decay.</text>
</comment>
<comment type="similarity">
    <text evidence="4 7">Belongs to the type-B carboxylesterase/lipase family.</text>
</comment>
<name>EST1F_MOUSE</name>
<keyword id="KW-0025">Alternative splicing</keyword>
<keyword id="KW-0963">Cytoplasm</keyword>
<keyword id="KW-1015">Disulfide bond</keyword>
<keyword id="KW-0256">Endoplasmic reticulum</keyword>
<keyword id="KW-0378">Hydrolase</keyword>
<keyword id="KW-0551">Lipid droplet</keyword>
<keyword id="KW-0492">Microsome</keyword>
<keyword id="KW-1185">Reference proteome</keyword>
<keyword id="KW-0732">Signal</keyword>
<gene>
    <name evidence="14" type="primary">Ces1f</name>
    <name evidence="14" type="synonym">CesML1</name>
</gene>
<accession>Q91WU0</accession>
<accession>D6RHA4</accession>
<accession>Q3UWB1</accession>
<feature type="signal peptide" evidence="4">
    <location>
        <begin position="1"/>
        <end position="17"/>
    </location>
</feature>
<feature type="chain" id="PRO_5006993881" description="Carboxylesterase 1F">
    <location>
        <begin position="18"/>
        <end position="561"/>
    </location>
</feature>
<feature type="short sequence motif" description="Prevents secretion from ER" evidence="6">
    <location>
        <begin position="558"/>
        <end position="561"/>
    </location>
</feature>
<feature type="active site" description="Acyl-ester intermediate" evidence="5">
    <location>
        <position position="221"/>
    </location>
</feature>
<feature type="active site" description="Charge relay system" evidence="1">
    <location>
        <position position="353"/>
    </location>
</feature>
<feature type="active site" description="Charge relay system" evidence="1">
    <location>
        <position position="466"/>
    </location>
</feature>
<feature type="disulfide bond" evidence="3">
    <location>
        <begin position="87"/>
        <end position="116"/>
    </location>
</feature>
<feature type="disulfide bond" evidence="3">
    <location>
        <begin position="273"/>
        <end position="284"/>
    </location>
</feature>
<feature type="splice variant" id="VSP_058396" description="In isoform 2.">
    <original>GNPSSPPVVDTAHGKVLGKHVNVEGFSQPVAVF</original>
    <variation>EGGEIDKEAVGELEKIVCCSRMEPKEIPLHHLW</variation>
    <location>
        <begin position="18"/>
        <end position="50"/>
    </location>
</feature>
<feature type="splice variant" id="VSP_058397" description="In isoform 2.">
    <location>
        <begin position="51"/>
        <end position="561"/>
    </location>
</feature>
<feature type="sequence conflict" description="In Ref. 1; BAE23005." evidence="10" ref="1">
    <original>G</original>
    <variation>D</variation>
    <location>
        <position position="209"/>
    </location>
</feature>
<feature type="sequence conflict" description="In Ref. 1; BAE23005." evidence="10" ref="1">
    <original>K</original>
    <variation>R</variation>
    <location>
        <position position="329"/>
    </location>
</feature>
<sequence>MFLSTLFLVSLATCVICGNPSSPPVVDTAHGKVLGKHVNVEGFSQPVAVFLGIPFAKPPLGSLRFAPPQPAEPWSSVKNATTYPPMCSQDAARGQAVNDLITNRKEKIHLEFSEDCLYLNIYTPADFSKNSRLPVMVWIHGGGLKLGGASSFDGRALSAYENVVVVAIQYRLSIWGFFSTGDEHSRGNWGHLDQVAALHWVQDNIANFGGDPGSVTIFGESAGGYSVSILILSPLSKNLFHRAISESGVAFIPGMFTKDVRPITEQIAVTAGCKTTTSAVIVHCMRQKTEEELLEIMHKLNLYKLSLQGDTKNSDQFVTSVLDGVVLPKDPKEILAEKNFNTVPYIVGINKQECGWLLPTMTGFLPADVKLDKKKAIALLEQFASMTGIPEDIIPVAVEKYTKGSDDPDQIREGVLDAMGDVAFGVPSVIVSRGHRDTGAPTYMYEYQYYPSFSSPQRPKNVVGDHADDVYSVFGAPILREGASEEEINLSKMVMKFWANFARNGNPNGKGLPHWPKYDQKEGYLHIGGTTQQAQRLKEEEVTFWTQSLAKKQPQPYHNEL</sequence>
<evidence type="ECO:0000250" key="1">
    <source>
        <dbReference type="UniProtKB" id="P23141"/>
    </source>
</evidence>
<evidence type="ECO:0000250" key="2">
    <source>
        <dbReference type="UniProtKB" id="Q64573"/>
    </source>
</evidence>
<evidence type="ECO:0000250" key="3">
    <source>
        <dbReference type="UniProtKB" id="Q99K10"/>
    </source>
</evidence>
<evidence type="ECO:0000255" key="4"/>
<evidence type="ECO:0000255" key="5">
    <source>
        <dbReference type="PROSITE-ProRule" id="PRU10039"/>
    </source>
</evidence>
<evidence type="ECO:0000255" key="6">
    <source>
        <dbReference type="PROSITE-ProRule" id="PRU10138"/>
    </source>
</evidence>
<evidence type="ECO:0000255" key="7">
    <source>
        <dbReference type="RuleBase" id="RU361235"/>
    </source>
</evidence>
<evidence type="ECO:0000269" key="8">
    <source>
    </source>
</evidence>
<evidence type="ECO:0000303" key="9">
    <source>
    </source>
</evidence>
<evidence type="ECO:0000305" key="10"/>
<evidence type="ECO:0000305" key="11">
    <source>
    </source>
</evidence>
<evidence type="ECO:0000312" key="12">
    <source>
        <dbReference type="EMBL" id="AAH13479.1"/>
    </source>
</evidence>
<evidence type="ECO:0000312" key="13">
    <source>
        <dbReference type="EMBL" id="BAE23005.1"/>
    </source>
</evidence>
<evidence type="ECO:0000312" key="14">
    <source>
        <dbReference type="MGI" id="MGI:2142687"/>
    </source>
</evidence>
<evidence type="ECO:0000312" key="15">
    <source>
        <dbReference type="Proteomes" id="UP000000589"/>
    </source>
</evidence>
<organism evidence="12">
    <name type="scientific">Mus musculus</name>
    <name type="common">Mouse</name>
    <dbReference type="NCBI Taxonomy" id="10090"/>
    <lineage>
        <taxon>Eukaryota</taxon>
        <taxon>Metazoa</taxon>
        <taxon>Chordata</taxon>
        <taxon>Craniata</taxon>
        <taxon>Vertebrata</taxon>
        <taxon>Euteleostomi</taxon>
        <taxon>Mammalia</taxon>
        <taxon>Eutheria</taxon>
        <taxon>Euarchontoglires</taxon>
        <taxon>Glires</taxon>
        <taxon>Rodentia</taxon>
        <taxon>Myomorpha</taxon>
        <taxon>Muroidea</taxon>
        <taxon>Muridae</taxon>
        <taxon>Murinae</taxon>
        <taxon>Mus</taxon>
        <taxon>Mus</taxon>
    </lineage>
</organism>